<gene>
    <name type="ordered locus">SCO4923</name>
    <name type="ORF">SCK13.15c</name>
</gene>
<dbReference type="EC" id="3.6.1.9" evidence="1"/>
<dbReference type="EMBL" id="AL939121">
    <property type="protein sequence ID" value="CAD30913.1"/>
    <property type="molecule type" value="Genomic_DNA"/>
</dbReference>
<dbReference type="RefSeq" id="NP_629076.1">
    <property type="nucleotide sequence ID" value="NC_003888.3"/>
</dbReference>
<dbReference type="RefSeq" id="WP_003974050.1">
    <property type="nucleotide sequence ID" value="NZ_VNID01000027.1"/>
</dbReference>
<dbReference type="SMR" id="Q9EWV6"/>
<dbReference type="FunCoup" id="Q9EWV6">
    <property type="interactions" value="261"/>
</dbReference>
<dbReference type="STRING" id="100226.gene:17762572"/>
<dbReference type="PaxDb" id="100226-SCO4923"/>
<dbReference type="KEGG" id="sco:SCO4923"/>
<dbReference type="PATRIC" id="fig|100226.15.peg.5002"/>
<dbReference type="eggNOG" id="COG0424">
    <property type="taxonomic scope" value="Bacteria"/>
</dbReference>
<dbReference type="HOGENOM" id="CLU_040416_1_2_11"/>
<dbReference type="InParanoid" id="Q9EWV6"/>
<dbReference type="OrthoDB" id="3527985at2"/>
<dbReference type="PhylomeDB" id="Q9EWV6"/>
<dbReference type="Proteomes" id="UP000001973">
    <property type="component" value="Chromosome"/>
</dbReference>
<dbReference type="GO" id="GO:0005737">
    <property type="term" value="C:cytoplasm"/>
    <property type="evidence" value="ECO:0007669"/>
    <property type="project" value="UniProtKB-SubCell"/>
</dbReference>
<dbReference type="GO" id="GO:0047429">
    <property type="term" value="F:nucleoside triphosphate diphosphatase activity"/>
    <property type="evidence" value="ECO:0000318"/>
    <property type="project" value="GO_Central"/>
</dbReference>
<dbReference type="GO" id="GO:0009117">
    <property type="term" value="P:nucleotide metabolic process"/>
    <property type="evidence" value="ECO:0007669"/>
    <property type="project" value="UniProtKB-KW"/>
</dbReference>
<dbReference type="CDD" id="cd00555">
    <property type="entry name" value="Maf"/>
    <property type="match status" value="1"/>
</dbReference>
<dbReference type="FunFam" id="3.90.950.10:FF:000010">
    <property type="entry name" value="Nucleoside triphosphate pyrophosphatase"/>
    <property type="match status" value="1"/>
</dbReference>
<dbReference type="Gene3D" id="3.90.950.10">
    <property type="match status" value="1"/>
</dbReference>
<dbReference type="HAMAP" id="MF_00528">
    <property type="entry name" value="Maf"/>
    <property type="match status" value="1"/>
</dbReference>
<dbReference type="InterPro" id="IPR029001">
    <property type="entry name" value="ITPase-like_fam"/>
</dbReference>
<dbReference type="InterPro" id="IPR003697">
    <property type="entry name" value="Maf-like"/>
</dbReference>
<dbReference type="NCBIfam" id="TIGR00172">
    <property type="entry name" value="maf"/>
    <property type="match status" value="1"/>
</dbReference>
<dbReference type="PANTHER" id="PTHR43213">
    <property type="entry name" value="BIFUNCTIONAL DTTP/UTP PYROPHOSPHATASE/METHYLTRANSFERASE PROTEIN-RELATED"/>
    <property type="match status" value="1"/>
</dbReference>
<dbReference type="PANTHER" id="PTHR43213:SF5">
    <property type="entry name" value="BIFUNCTIONAL DTTP_UTP PYROPHOSPHATASE_METHYLTRANSFERASE PROTEIN-RELATED"/>
    <property type="match status" value="1"/>
</dbReference>
<dbReference type="Pfam" id="PF02545">
    <property type="entry name" value="Maf"/>
    <property type="match status" value="1"/>
</dbReference>
<dbReference type="PIRSF" id="PIRSF006305">
    <property type="entry name" value="Maf"/>
    <property type="match status" value="1"/>
</dbReference>
<dbReference type="SUPFAM" id="SSF52972">
    <property type="entry name" value="ITPase-like"/>
    <property type="match status" value="1"/>
</dbReference>
<comment type="function">
    <text evidence="1">Nucleoside triphosphate pyrophosphatase. May have a dual role in cell division arrest and in preventing the incorporation of modified nucleotides into cellular nucleic acids.</text>
</comment>
<comment type="catalytic activity">
    <reaction evidence="1">
        <text>a ribonucleoside 5'-triphosphate + H2O = a ribonucleoside 5'-phosphate + diphosphate + H(+)</text>
        <dbReference type="Rhea" id="RHEA:23996"/>
        <dbReference type="ChEBI" id="CHEBI:15377"/>
        <dbReference type="ChEBI" id="CHEBI:15378"/>
        <dbReference type="ChEBI" id="CHEBI:33019"/>
        <dbReference type="ChEBI" id="CHEBI:58043"/>
        <dbReference type="ChEBI" id="CHEBI:61557"/>
        <dbReference type="EC" id="3.6.1.9"/>
    </reaction>
</comment>
<comment type="catalytic activity">
    <reaction evidence="1">
        <text>a 2'-deoxyribonucleoside 5'-triphosphate + H2O = a 2'-deoxyribonucleoside 5'-phosphate + diphosphate + H(+)</text>
        <dbReference type="Rhea" id="RHEA:44644"/>
        <dbReference type="ChEBI" id="CHEBI:15377"/>
        <dbReference type="ChEBI" id="CHEBI:15378"/>
        <dbReference type="ChEBI" id="CHEBI:33019"/>
        <dbReference type="ChEBI" id="CHEBI:61560"/>
        <dbReference type="ChEBI" id="CHEBI:65317"/>
        <dbReference type="EC" id="3.6.1.9"/>
    </reaction>
</comment>
<comment type="cofactor">
    <cofactor evidence="1">
        <name>a divalent metal cation</name>
        <dbReference type="ChEBI" id="CHEBI:60240"/>
    </cofactor>
</comment>
<comment type="subcellular location">
    <subcellularLocation>
        <location evidence="1">Cytoplasm</location>
    </subcellularLocation>
</comment>
<comment type="similarity">
    <text evidence="1">Belongs to the Maf family.</text>
</comment>
<organism>
    <name type="scientific">Streptomyces coelicolor (strain ATCC BAA-471 / A3(2) / M145)</name>
    <dbReference type="NCBI Taxonomy" id="100226"/>
    <lineage>
        <taxon>Bacteria</taxon>
        <taxon>Bacillati</taxon>
        <taxon>Actinomycetota</taxon>
        <taxon>Actinomycetes</taxon>
        <taxon>Kitasatosporales</taxon>
        <taxon>Streptomycetaceae</taxon>
        <taxon>Streptomyces</taxon>
        <taxon>Streptomyces albidoflavus group</taxon>
    </lineage>
</organism>
<protein>
    <recommendedName>
        <fullName evidence="1">Nucleoside triphosphate pyrophosphatase</fullName>
        <ecNumber evidence="1">3.6.1.9</ecNumber>
    </recommendedName>
    <alternativeName>
        <fullName evidence="1">Nucleotide pyrophosphatase</fullName>
        <shortName evidence="1">Nucleotide PPase</shortName>
    </alternativeName>
</protein>
<keyword id="KW-0963">Cytoplasm</keyword>
<keyword id="KW-0378">Hydrolase</keyword>
<keyword id="KW-0546">Nucleotide metabolism</keyword>
<keyword id="KW-1185">Reference proteome</keyword>
<reference key="1">
    <citation type="journal article" date="2002" name="Nature">
        <title>Complete genome sequence of the model actinomycete Streptomyces coelicolor A3(2).</title>
        <authorList>
            <person name="Bentley S.D."/>
            <person name="Chater K.F."/>
            <person name="Cerdeno-Tarraga A.-M."/>
            <person name="Challis G.L."/>
            <person name="Thomson N.R."/>
            <person name="James K.D."/>
            <person name="Harris D.E."/>
            <person name="Quail M.A."/>
            <person name="Kieser H."/>
            <person name="Harper D."/>
            <person name="Bateman A."/>
            <person name="Brown S."/>
            <person name="Chandra G."/>
            <person name="Chen C.W."/>
            <person name="Collins M."/>
            <person name="Cronin A."/>
            <person name="Fraser A."/>
            <person name="Goble A."/>
            <person name="Hidalgo J."/>
            <person name="Hornsby T."/>
            <person name="Howarth S."/>
            <person name="Huang C.-H."/>
            <person name="Kieser T."/>
            <person name="Larke L."/>
            <person name="Murphy L.D."/>
            <person name="Oliver K."/>
            <person name="O'Neil S."/>
            <person name="Rabbinowitsch E."/>
            <person name="Rajandream M.A."/>
            <person name="Rutherford K.M."/>
            <person name="Rutter S."/>
            <person name="Seeger K."/>
            <person name="Saunders D."/>
            <person name="Sharp S."/>
            <person name="Squares R."/>
            <person name="Squares S."/>
            <person name="Taylor K."/>
            <person name="Warren T."/>
            <person name="Wietzorrek A."/>
            <person name="Woodward J.R."/>
            <person name="Barrell B.G."/>
            <person name="Parkhill J."/>
            <person name="Hopwood D.A."/>
        </authorList>
    </citation>
    <scope>NUCLEOTIDE SEQUENCE [LARGE SCALE GENOMIC DNA]</scope>
    <source>
        <strain>ATCC BAA-471 / A3(2) / M145</strain>
    </source>
</reference>
<accession>Q9EWV6</accession>
<sequence>MTPQPRRRLVLASQSPARLGLLRQAGLAPEVLVSGVDEEAVTAPTPAELALALAEAKASVVAAKPEVHGALVIGCDSVLDLDGQALGKPADAEEATARWKAMRGRAGTLQTGHCVWDTASGRHVSATASTVVRFGEPTDDEIAAYVASGEPLHVAGAFTLDGRSAPFIDGIDGDHGNVIGLSLPLLRRLLADLGTGITELWAPAED</sequence>
<name>NTPP_STRCO</name>
<proteinExistence type="inferred from homology"/>
<evidence type="ECO:0000255" key="1">
    <source>
        <dbReference type="HAMAP-Rule" id="MF_00528"/>
    </source>
</evidence>
<feature type="chain" id="PRO_0000123062" description="Nucleoside triphosphate pyrophosphatase">
    <location>
        <begin position="1"/>
        <end position="206"/>
    </location>
</feature>
<feature type="active site" description="Proton acceptor" evidence="1">
    <location>
        <position position="76"/>
    </location>
</feature>